<keyword id="KW-0963">Cytoplasm</keyword>
<keyword id="KW-0378">Hydrolase</keyword>
<keyword id="KW-0479">Metal-binding</keyword>
<keyword id="KW-1185">Reference proteome</keyword>
<keyword id="KW-0862">Zinc</keyword>
<evidence type="ECO:0000250" key="1"/>
<evidence type="ECO:0000256" key="2">
    <source>
        <dbReference type="SAM" id="MobiDB-lite"/>
    </source>
</evidence>
<evidence type="ECO:0000305" key="3"/>
<gene>
    <name type="primary">PNG1</name>
    <name type="ordered locus">ABR193W</name>
</gene>
<feature type="chain" id="PRO_0000248983" description="Peptide-N(4)-(N-acetyl-beta-glucosaminyl)asparagine amidase">
    <location>
        <begin position="1"/>
        <end position="350"/>
    </location>
</feature>
<feature type="region of interest" description="Disordered" evidence="2">
    <location>
        <begin position="324"/>
        <end position="350"/>
    </location>
</feature>
<feature type="compositionally biased region" description="Basic and acidic residues" evidence="2">
    <location>
        <begin position="340"/>
        <end position="350"/>
    </location>
</feature>
<feature type="active site" description="Nucleophile" evidence="1">
    <location>
        <position position="183"/>
    </location>
</feature>
<feature type="active site" evidence="1">
    <location>
        <position position="210"/>
    </location>
</feature>
<feature type="active site" evidence="1">
    <location>
        <position position="227"/>
    </location>
</feature>
<feature type="binding site" evidence="1">
    <location>
        <position position="123"/>
    </location>
    <ligand>
        <name>Zn(2+)</name>
        <dbReference type="ChEBI" id="CHEBI:29105"/>
    </ligand>
</feature>
<feature type="binding site" evidence="1">
    <location>
        <position position="126"/>
    </location>
    <ligand>
        <name>Zn(2+)</name>
        <dbReference type="ChEBI" id="CHEBI:29105"/>
    </ligand>
</feature>
<feature type="binding site" evidence="1">
    <location>
        <position position="157"/>
    </location>
    <ligand>
        <name>Zn(2+)</name>
        <dbReference type="ChEBI" id="CHEBI:29105"/>
    </ligand>
</feature>
<feature type="binding site" evidence="1">
    <location>
        <position position="160"/>
    </location>
    <ligand>
        <name>Zn(2+)</name>
        <dbReference type="ChEBI" id="CHEBI:29105"/>
    </ligand>
</feature>
<feature type="binding site" evidence="1">
    <location>
        <position position="230"/>
    </location>
    <ligand>
        <name>substrate</name>
    </ligand>
</feature>
<sequence length="350" mass="40859">MRVSEDTSTKEVFERVAADFLQLYKRCVLAQTREVRSSDRERCEELVRRNALARELCKLHQTLCFVYENDALYGIVLDALDLEGIYGRVEEGPGADDYQDRLVQELLRYFKDEFFTWCDKPLCARCGTAKKQAAVGHGKPTVEEARYRCTVVELFRCEDCGDVARFPRYNDPLKLLETRTGRCGEWCNLFMLILRSFGIEARYTWNREDHVWCEVYSNALKRWVHVDSCEKSFDEPHIYSVNWNKAMSYVIAFSNRSVKDVSRRYIVRNRLPRDQIDEDDLQFLTKYLTKLLRLQLPDEERYLLHCRDELEAIDLLGSKTAPMEIPPAAGAAGRQSGSADWKRQRGEDGR</sequence>
<organism>
    <name type="scientific">Eremothecium gossypii (strain ATCC 10895 / CBS 109.51 / FGSC 9923 / NRRL Y-1056)</name>
    <name type="common">Yeast</name>
    <name type="synonym">Ashbya gossypii</name>
    <dbReference type="NCBI Taxonomy" id="284811"/>
    <lineage>
        <taxon>Eukaryota</taxon>
        <taxon>Fungi</taxon>
        <taxon>Dikarya</taxon>
        <taxon>Ascomycota</taxon>
        <taxon>Saccharomycotina</taxon>
        <taxon>Saccharomycetes</taxon>
        <taxon>Saccharomycetales</taxon>
        <taxon>Saccharomycetaceae</taxon>
        <taxon>Eremothecium</taxon>
    </lineage>
</organism>
<name>PNG1_EREGS</name>
<dbReference type="EC" id="3.5.1.52"/>
<dbReference type="EMBL" id="AE016815">
    <property type="protein sequence ID" value="AAS50966.1"/>
    <property type="molecule type" value="Genomic_DNA"/>
</dbReference>
<dbReference type="RefSeq" id="NP_983142.1">
    <property type="nucleotide sequence ID" value="NM_208495.1"/>
</dbReference>
<dbReference type="SMR" id="Q75D29"/>
<dbReference type="FunCoup" id="Q75D29">
    <property type="interactions" value="117"/>
</dbReference>
<dbReference type="STRING" id="284811.Q75D29"/>
<dbReference type="EnsemblFungi" id="AAS50966">
    <property type="protein sequence ID" value="AAS50966"/>
    <property type="gene ID" value="AGOS_ABR193W"/>
</dbReference>
<dbReference type="GeneID" id="4619252"/>
<dbReference type="KEGG" id="ago:AGOS_ABR193W"/>
<dbReference type="eggNOG" id="KOG0909">
    <property type="taxonomic scope" value="Eukaryota"/>
</dbReference>
<dbReference type="HOGENOM" id="CLU_031058_0_1_1"/>
<dbReference type="InParanoid" id="Q75D29"/>
<dbReference type="OMA" id="AWDKPRL"/>
<dbReference type="OrthoDB" id="409136at2759"/>
<dbReference type="Proteomes" id="UP000000591">
    <property type="component" value="Chromosome II"/>
</dbReference>
<dbReference type="GO" id="GO:0005829">
    <property type="term" value="C:cytosol"/>
    <property type="evidence" value="ECO:0007669"/>
    <property type="project" value="EnsemblFungi"/>
</dbReference>
<dbReference type="GO" id="GO:0005634">
    <property type="term" value="C:nucleus"/>
    <property type="evidence" value="ECO:0007669"/>
    <property type="project" value="EnsemblFungi"/>
</dbReference>
<dbReference type="GO" id="GO:0120125">
    <property type="term" value="C:PNGase complex"/>
    <property type="evidence" value="ECO:0007669"/>
    <property type="project" value="EnsemblFungi"/>
</dbReference>
<dbReference type="GO" id="GO:0046872">
    <property type="term" value="F:metal ion binding"/>
    <property type="evidence" value="ECO:0007669"/>
    <property type="project" value="UniProtKB-KW"/>
</dbReference>
<dbReference type="GO" id="GO:0000224">
    <property type="term" value="F:peptide-N4-(N-acetyl-beta-glucosaminyl)asparagine amidase activity"/>
    <property type="evidence" value="ECO:0007669"/>
    <property type="project" value="UniProtKB-EC"/>
</dbReference>
<dbReference type="GO" id="GO:0006515">
    <property type="term" value="P:protein quality control for misfolded or incompletely synthesized proteins"/>
    <property type="evidence" value="ECO:0007669"/>
    <property type="project" value="EnsemblFungi"/>
</dbReference>
<dbReference type="GO" id="GO:0097466">
    <property type="term" value="P:ubiquitin-dependent glycoprotein ERAD pathway"/>
    <property type="evidence" value="ECO:0007669"/>
    <property type="project" value="EnsemblFungi"/>
</dbReference>
<dbReference type="FunFam" id="3.10.620.30:FF:000004">
    <property type="entry name" value="Peptidase (PNG1)"/>
    <property type="match status" value="1"/>
</dbReference>
<dbReference type="Gene3D" id="2.20.25.10">
    <property type="match status" value="1"/>
</dbReference>
<dbReference type="Gene3D" id="3.10.620.30">
    <property type="match status" value="1"/>
</dbReference>
<dbReference type="InterPro" id="IPR038765">
    <property type="entry name" value="Papain-like_cys_pep_sf"/>
</dbReference>
<dbReference type="InterPro" id="IPR050883">
    <property type="entry name" value="PNGase"/>
</dbReference>
<dbReference type="InterPro" id="IPR002931">
    <property type="entry name" value="Transglutaminase-like"/>
</dbReference>
<dbReference type="PANTHER" id="PTHR12143">
    <property type="entry name" value="PEPTIDE N-GLYCANASE PNGASE -RELATED"/>
    <property type="match status" value="1"/>
</dbReference>
<dbReference type="PANTHER" id="PTHR12143:SF19">
    <property type="entry name" value="PEPTIDE-N(4)-(N-ACETYL-BETA-GLUCOSAMINYL)ASPARAGINE AMIDASE"/>
    <property type="match status" value="1"/>
</dbReference>
<dbReference type="Pfam" id="PF01841">
    <property type="entry name" value="Transglut_core"/>
    <property type="match status" value="1"/>
</dbReference>
<dbReference type="SMART" id="SM00460">
    <property type="entry name" value="TGc"/>
    <property type="match status" value="1"/>
</dbReference>
<dbReference type="SUPFAM" id="SSF54001">
    <property type="entry name" value="Cysteine proteinases"/>
    <property type="match status" value="1"/>
</dbReference>
<accession>Q75D29</accession>
<protein>
    <recommendedName>
        <fullName>Peptide-N(4)-(N-acetyl-beta-glucosaminyl)asparagine amidase</fullName>
        <shortName>PNGase</shortName>
        <ecNumber>3.5.1.52</ecNumber>
    </recommendedName>
    <alternativeName>
        <fullName>Peptide:N-glycanase 1</fullName>
    </alternativeName>
</protein>
<reference key="1">
    <citation type="journal article" date="2004" name="Science">
        <title>The Ashbya gossypii genome as a tool for mapping the ancient Saccharomyces cerevisiae genome.</title>
        <authorList>
            <person name="Dietrich F.S."/>
            <person name="Voegeli S."/>
            <person name="Brachat S."/>
            <person name="Lerch A."/>
            <person name="Gates K."/>
            <person name="Steiner S."/>
            <person name="Mohr C."/>
            <person name="Poehlmann R."/>
            <person name="Luedi P."/>
            <person name="Choi S."/>
            <person name="Wing R.A."/>
            <person name="Flavier A."/>
            <person name="Gaffney T.D."/>
            <person name="Philippsen P."/>
        </authorList>
    </citation>
    <scope>NUCLEOTIDE SEQUENCE [LARGE SCALE GENOMIC DNA]</scope>
    <source>
        <strain>ATCC 10895 / CBS 109.51 / FGSC 9923 / NRRL Y-1056</strain>
    </source>
</reference>
<reference key="2">
    <citation type="journal article" date="2013" name="G3 (Bethesda)">
        <title>Genomes of Ashbya fungi isolated from insects reveal four mating-type loci, numerous translocations, lack of transposons, and distinct gene duplications.</title>
        <authorList>
            <person name="Dietrich F.S."/>
            <person name="Voegeli S."/>
            <person name="Kuo S."/>
            <person name="Philippsen P."/>
        </authorList>
    </citation>
    <scope>GENOME REANNOTATION</scope>
    <source>
        <strain>ATCC 10895 / CBS 109.51 / FGSC 9923 / NRRL Y-1056</strain>
    </source>
</reference>
<comment type="function">
    <text evidence="1">Specifically deglycosylates the denatured form of N-linked glycoproteins in the cytoplasm and assists their proteasome-mediated degradation. Cleaves the beta-aspartyl-glucosamine (GlcNAc) of the glycan and the amide side chain of Asn, converting Asn to Asp. Prefers proteins containing high-mannose over those bearing complex type oligosaccharides. Can recognize misfolded proteins in the endoplasmic reticulum that are exported to the cytosol to be destroyed and deglycosylate them, while it has no activity toward native proteins. Deglycosylation is a prerequisite for subsequent proteasome-mediated degradation of some, but not all, misfolded glycoproteins (By similarity).</text>
</comment>
<comment type="catalytic activity">
    <reaction>
        <text>Hydrolysis of an N(4)-(acetyl-beta-D-glucosaminyl)asparagine residue in which the glucosamine residue may be further glycosylated, to yield a (substituted) N-acetyl-beta-D-glucosaminylamine and a peptide containing an aspartate residue.</text>
        <dbReference type="EC" id="3.5.1.52"/>
    </reaction>
</comment>
<comment type="cofactor">
    <cofactor evidence="1">
        <name>Zn(2+)</name>
        <dbReference type="ChEBI" id="CHEBI:29105"/>
    </cofactor>
    <text evidence="1">Binds 1 zinc ion per subunit.</text>
</comment>
<comment type="subcellular location">
    <subcellularLocation>
        <location evidence="1">Cytoplasm</location>
    </subcellularLocation>
</comment>
<comment type="similarity">
    <text evidence="3">Belongs to the transglutaminase-like superfamily. PNGase family.</text>
</comment>
<proteinExistence type="inferred from homology"/>